<reference key="1">
    <citation type="submission" date="2008-02" db="EMBL/GenBank/DDBJ databases">
        <title>Complete sequence of Synechococcus sp. PCC 7002.</title>
        <authorList>
            <person name="Li T."/>
            <person name="Zhao J."/>
            <person name="Zhao C."/>
            <person name="Liu Z."/>
            <person name="Zhao F."/>
            <person name="Marquardt J."/>
            <person name="Nomura C.T."/>
            <person name="Persson S."/>
            <person name="Detter J.C."/>
            <person name="Richardson P.M."/>
            <person name="Lanz C."/>
            <person name="Schuster S.C."/>
            <person name="Wang J."/>
            <person name="Li S."/>
            <person name="Huang X."/>
            <person name="Cai T."/>
            <person name="Yu Z."/>
            <person name="Luo J."/>
            <person name="Zhao J."/>
            <person name="Bryant D.A."/>
        </authorList>
    </citation>
    <scope>NUCLEOTIDE SEQUENCE [LARGE SCALE GENOMIC DNA]</scope>
    <source>
        <strain>ATCC 27264 / PCC 7002 / PR-6</strain>
    </source>
</reference>
<proteinExistence type="inferred from homology"/>
<dbReference type="EMBL" id="CP000951">
    <property type="protein sequence ID" value="ACA99061.1"/>
    <property type="molecule type" value="Genomic_DNA"/>
</dbReference>
<dbReference type="RefSeq" id="WP_012306684.1">
    <property type="nucleotide sequence ID" value="NZ_JAHHPU010000001.1"/>
</dbReference>
<dbReference type="SMR" id="B1XJT3"/>
<dbReference type="STRING" id="32049.SYNPCC7002_A1059"/>
<dbReference type="KEGG" id="syp:SYNPCC7002_A1059"/>
<dbReference type="eggNOG" id="COG0092">
    <property type="taxonomic scope" value="Bacteria"/>
</dbReference>
<dbReference type="HOGENOM" id="CLU_058591_0_2_3"/>
<dbReference type="Proteomes" id="UP000001688">
    <property type="component" value="Chromosome"/>
</dbReference>
<dbReference type="GO" id="GO:0022627">
    <property type="term" value="C:cytosolic small ribosomal subunit"/>
    <property type="evidence" value="ECO:0007669"/>
    <property type="project" value="TreeGrafter"/>
</dbReference>
<dbReference type="GO" id="GO:0003729">
    <property type="term" value="F:mRNA binding"/>
    <property type="evidence" value="ECO:0007669"/>
    <property type="project" value="UniProtKB-UniRule"/>
</dbReference>
<dbReference type="GO" id="GO:0019843">
    <property type="term" value="F:rRNA binding"/>
    <property type="evidence" value="ECO:0007669"/>
    <property type="project" value="UniProtKB-UniRule"/>
</dbReference>
<dbReference type="GO" id="GO:0003735">
    <property type="term" value="F:structural constituent of ribosome"/>
    <property type="evidence" value="ECO:0007669"/>
    <property type="project" value="InterPro"/>
</dbReference>
<dbReference type="GO" id="GO:0006412">
    <property type="term" value="P:translation"/>
    <property type="evidence" value="ECO:0007669"/>
    <property type="project" value="UniProtKB-UniRule"/>
</dbReference>
<dbReference type="CDD" id="cd02412">
    <property type="entry name" value="KH-II_30S_S3"/>
    <property type="match status" value="1"/>
</dbReference>
<dbReference type="FunFam" id="3.30.300.20:FF:000001">
    <property type="entry name" value="30S ribosomal protein S3"/>
    <property type="match status" value="1"/>
</dbReference>
<dbReference type="Gene3D" id="3.30.300.20">
    <property type="match status" value="1"/>
</dbReference>
<dbReference type="Gene3D" id="3.30.1140.32">
    <property type="entry name" value="Ribosomal protein S3, C-terminal domain"/>
    <property type="match status" value="1"/>
</dbReference>
<dbReference type="HAMAP" id="MF_01309_B">
    <property type="entry name" value="Ribosomal_uS3_B"/>
    <property type="match status" value="1"/>
</dbReference>
<dbReference type="InterPro" id="IPR004087">
    <property type="entry name" value="KH_dom"/>
</dbReference>
<dbReference type="InterPro" id="IPR015946">
    <property type="entry name" value="KH_dom-like_a/b"/>
</dbReference>
<dbReference type="InterPro" id="IPR004044">
    <property type="entry name" value="KH_dom_type_2"/>
</dbReference>
<dbReference type="InterPro" id="IPR009019">
    <property type="entry name" value="KH_sf_prok-type"/>
</dbReference>
<dbReference type="InterPro" id="IPR036419">
    <property type="entry name" value="Ribosomal_S3_C_sf"/>
</dbReference>
<dbReference type="InterPro" id="IPR005704">
    <property type="entry name" value="Ribosomal_uS3_bac-typ"/>
</dbReference>
<dbReference type="InterPro" id="IPR001351">
    <property type="entry name" value="Ribosomal_uS3_C"/>
</dbReference>
<dbReference type="InterPro" id="IPR018280">
    <property type="entry name" value="Ribosomal_uS3_CS"/>
</dbReference>
<dbReference type="NCBIfam" id="TIGR01009">
    <property type="entry name" value="rpsC_bact"/>
    <property type="match status" value="1"/>
</dbReference>
<dbReference type="PANTHER" id="PTHR11760">
    <property type="entry name" value="30S/40S RIBOSOMAL PROTEIN S3"/>
    <property type="match status" value="1"/>
</dbReference>
<dbReference type="PANTHER" id="PTHR11760:SF19">
    <property type="entry name" value="SMALL RIBOSOMAL SUBUNIT PROTEIN US3C"/>
    <property type="match status" value="1"/>
</dbReference>
<dbReference type="Pfam" id="PF07650">
    <property type="entry name" value="KH_2"/>
    <property type="match status" value="1"/>
</dbReference>
<dbReference type="Pfam" id="PF00189">
    <property type="entry name" value="Ribosomal_S3_C"/>
    <property type="match status" value="1"/>
</dbReference>
<dbReference type="SMART" id="SM00322">
    <property type="entry name" value="KH"/>
    <property type="match status" value="1"/>
</dbReference>
<dbReference type="SUPFAM" id="SSF54814">
    <property type="entry name" value="Prokaryotic type KH domain (KH-domain type II)"/>
    <property type="match status" value="1"/>
</dbReference>
<dbReference type="SUPFAM" id="SSF54821">
    <property type="entry name" value="Ribosomal protein S3 C-terminal domain"/>
    <property type="match status" value="1"/>
</dbReference>
<dbReference type="PROSITE" id="PS50823">
    <property type="entry name" value="KH_TYPE_2"/>
    <property type="match status" value="1"/>
</dbReference>
<dbReference type="PROSITE" id="PS00548">
    <property type="entry name" value="RIBOSOMAL_S3"/>
    <property type="match status" value="1"/>
</dbReference>
<protein>
    <recommendedName>
        <fullName evidence="1">Small ribosomal subunit protein uS3</fullName>
    </recommendedName>
    <alternativeName>
        <fullName evidence="3">30S ribosomal protein S3</fullName>
    </alternativeName>
</protein>
<gene>
    <name evidence="1" type="primary">rpsC</name>
    <name evidence="1" type="synonym">rps3</name>
    <name type="ordered locus">SYNPCC7002_A1059</name>
</gene>
<comment type="function">
    <text evidence="1">Binds the lower part of the 30S subunit head. Binds mRNA in the 70S ribosome, positioning it for translation.</text>
</comment>
<comment type="subunit">
    <text evidence="1">Part of the 30S ribosomal subunit. Forms a tight complex with proteins S10 and S14.</text>
</comment>
<comment type="similarity">
    <text evidence="1">Belongs to the universal ribosomal protein uS3 family.</text>
</comment>
<organism>
    <name type="scientific">Picosynechococcus sp. (strain ATCC 27264 / PCC 7002 / PR-6)</name>
    <name type="common">Agmenellum quadruplicatum</name>
    <dbReference type="NCBI Taxonomy" id="32049"/>
    <lineage>
        <taxon>Bacteria</taxon>
        <taxon>Bacillati</taxon>
        <taxon>Cyanobacteriota</taxon>
        <taxon>Cyanophyceae</taxon>
        <taxon>Oscillatoriophycideae</taxon>
        <taxon>Chroococcales</taxon>
        <taxon>Geminocystaceae</taxon>
        <taxon>Picosynechococcus</taxon>
    </lineage>
</organism>
<keyword id="KW-1185">Reference proteome</keyword>
<keyword id="KW-0687">Ribonucleoprotein</keyword>
<keyword id="KW-0689">Ribosomal protein</keyword>
<keyword id="KW-0694">RNA-binding</keyword>
<keyword id="KW-0699">rRNA-binding</keyword>
<sequence length="240" mass="27187">MGQKIHPVGFRLGITKEHLSRWYADPKQYPALVQEDYKIRQHIDANLNNAGISKVLIERKADQVDLEIHTARPGVVVGRGGSGIEALRTGLQDVLGDQRQIRINVVEVNRVDADAALIAEYIVQQLERRVSFRRVVRQAVQRAQRAEVQGIKIQVSGRLNGAEIARTEWVREGRVPLHTLRADIDYSYKTAQTIYGILGIKVWIFKGEIIPGQEETSAANAAPLPRRKSRRQQFEDRSEQ</sequence>
<name>RS3_PICP2</name>
<feature type="chain" id="PRO_1000141025" description="Small ribosomal subunit protein uS3">
    <location>
        <begin position="1"/>
        <end position="240"/>
    </location>
</feature>
<feature type="domain" description="KH type-2" evidence="1">
    <location>
        <begin position="39"/>
        <end position="109"/>
    </location>
</feature>
<feature type="region of interest" description="Disordered" evidence="2">
    <location>
        <begin position="216"/>
        <end position="240"/>
    </location>
</feature>
<accession>B1XJT3</accession>
<evidence type="ECO:0000255" key="1">
    <source>
        <dbReference type="HAMAP-Rule" id="MF_01309"/>
    </source>
</evidence>
<evidence type="ECO:0000256" key="2">
    <source>
        <dbReference type="SAM" id="MobiDB-lite"/>
    </source>
</evidence>
<evidence type="ECO:0000305" key="3"/>